<organism>
    <name type="scientific">Paracidovorax citrulli (strain AAC00-1)</name>
    <name type="common">Acidovorax citrulli</name>
    <dbReference type="NCBI Taxonomy" id="397945"/>
    <lineage>
        <taxon>Bacteria</taxon>
        <taxon>Pseudomonadati</taxon>
        <taxon>Pseudomonadota</taxon>
        <taxon>Betaproteobacteria</taxon>
        <taxon>Burkholderiales</taxon>
        <taxon>Comamonadaceae</taxon>
        <taxon>Paracidovorax</taxon>
    </lineage>
</organism>
<protein>
    <recommendedName>
        <fullName evidence="1">NADH-quinone oxidoreductase subunit I</fullName>
        <ecNumber evidence="1">7.1.1.-</ecNumber>
    </recommendedName>
    <alternativeName>
        <fullName evidence="1">NADH dehydrogenase I subunit I</fullName>
    </alternativeName>
    <alternativeName>
        <fullName evidence="1">NDH-1 subunit I</fullName>
    </alternativeName>
</protein>
<proteinExistence type="inferred from homology"/>
<accession>A1TLM4</accession>
<gene>
    <name evidence="1" type="primary">nuoI</name>
    <name type="ordered locus">Aave_1271</name>
</gene>
<keyword id="KW-0004">4Fe-4S</keyword>
<keyword id="KW-0997">Cell inner membrane</keyword>
<keyword id="KW-1003">Cell membrane</keyword>
<keyword id="KW-0408">Iron</keyword>
<keyword id="KW-0411">Iron-sulfur</keyword>
<keyword id="KW-0472">Membrane</keyword>
<keyword id="KW-0479">Metal-binding</keyword>
<keyword id="KW-0520">NAD</keyword>
<keyword id="KW-0874">Quinone</keyword>
<keyword id="KW-0677">Repeat</keyword>
<keyword id="KW-1278">Translocase</keyword>
<keyword id="KW-0830">Ubiquinone</keyword>
<comment type="function">
    <text evidence="1">NDH-1 shuttles electrons from NADH, via FMN and iron-sulfur (Fe-S) centers, to quinones in the respiratory chain. The immediate electron acceptor for the enzyme in this species is believed to be ubiquinone. Couples the redox reaction to proton translocation (for every two electrons transferred, four hydrogen ions are translocated across the cytoplasmic membrane), and thus conserves the redox energy in a proton gradient.</text>
</comment>
<comment type="catalytic activity">
    <reaction evidence="1">
        <text>a quinone + NADH + 5 H(+)(in) = a quinol + NAD(+) + 4 H(+)(out)</text>
        <dbReference type="Rhea" id="RHEA:57888"/>
        <dbReference type="ChEBI" id="CHEBI:15378"/>
        <dbReference type="ChEBI" id="CHEBI:24646"/>
        <dbReference type="ChEBI" id="CHEBI:57540"/>
        <dbReference type="ChEBI" id="CHEBI:57945"/>
        <dbReference type="ChEBI" id="CHEBI:132124"/>
    </reaction>
</comment>
<comment type="cofactor">
    <cofactor evidence="1">
        <name>[4Fe-4S] cluster</name>
        <dbReference type="ChEBI" id="CHEBI:49883"/>
    </cofactor>
    <text evidence="1">Binds 2 [4Fe-4S] clusters per subunit.</text>
</comment>
<comment type="subunit">
    <text evidence="1">NDH-1 is composed of 14 different subunits. Subunits NuoA, H, J, K, L, M, N constitute the membrane sector of the complex.</text>
</comment>
<comment type="subcellular location">
    <subcellularLocation>
        <location evidence="1">Cell inner membrane</location>
        <topology evidence="1">Peripheral membrane protein</topology>
    </subcellularLocation>
</comment>
<comment type="similarity">
    <text evidence="1">Belongs to the complex I 23 kDa subunit family.</text>
</comment>
<name>NUOI_PARC0</name>
<sequence length="171" mass="19282">MAAVAAATTSFSFKDFFKSFMLVELVKGMALTGRYAFRRKVTVQFPEEKTPLSPRFRGLHALRRYENGEERCIACKLCEAVCPALAITIESDVRADGSRRTTRYDIDLTKCIFCGFCEESCPVDSIVETQILEYHGEKRGDLYFTKDMLLAVGDRYEAEIAAAKAADAKYR</sequence>
<dbReference type="EC" id="7.1.1.-" evidence="1"/>
<dbReference type="EMBL" id="CP000512">
    <property type="protein sequence ID" value="ABM31862.1"/>
    <property type="molecule type" value="Genomic_DNA"/>
</dbReference>
<dbReference type="RefSeq" id="WP_011794414.1">
    <property type="nucleotide sequence ID" value="NC_008752.1"/>
</dbReference>
<dbReference type="SMR" id="A1TLM4"/>
<dbReference type="STRING" id="397945.Aave_1271"/>
<dbReference type="GeneID" id="79790934"/>
<dbReference type="KEGG" id="aav:Aave_1271"/>
<dbReference type="eggNOG" id="COG1143">
    <property type="taxonomic scope" value="Bacteria"/>
</dbReference>
<dbReference type="HOGENOM" id="CLU_067218_5_1_4"/>
<dbReference type="OrthoDB" id="9808559at2"/>
<dbReference type="Proteomes" id="UP000002596">
    <property type="component" value="Chromosome"/>
</dbReference>
<dbReference type="GO" id="GO:0005886">
    <property type="term" value="C:plasma membrane"/>
    <property type="evidence" value="ECO:0007669"/>
    <property type="project" value="UniProtKB-SubCell"/>
</dbReference>
<dbReference type="GO" id="GO:0051539">
    <property type="term" value="F:4 iron, 4 sulfur cluster binding"/>
    <property type="evidence" value="ECO:0007669"/>
    <property type="project" value="UniProtKB-KW"/>
</dbReference>
<dbReference type="GO" id="GO:0005506">
    <property type="term" value="F:iron ion binding"/>
    <property type="evidence" value="ECO:0007669"/>
    <property type="project" value="UniProtKB-UniRule"/>
</dbReference>
<dbReference type="GO" id="GO:0050136">
    <property type="term" value="F:NADH:ubiquinone reductase (non-electrogenic) activity"/>
    <property type="evidence" value="ECO:0007669"/>
    <property type="project" value="UniProtKB-UniRule"/>
</dbReference>
<dbReference type="GO" id="GO:0048038">
    <property type="term" value="F:quinone binding"/>
    <property type="evidence" value="ECO:0007669"/>
    <property type="project" value="UniProtKB-KW"/>
</dbReference>
<dbReference type="GO" id="GO:0009060">
    <property type="term" value="P:aerobic respiration"/>
    <property type="evidence" value="ECO:0007669"/>
    <property type="project" value="TreeGrafter"/>
</dbReference>
<dbReference type="FunFam" id="3.30.70.3270:FF:000003">
    <property type="entry name" value="NADH-quinone oxidoreductase subunit I"/>
    <property type="match status" value="1"/>
</dbReference>
<dbReference type="Gene3D" id="3.30.70.3270">
    <property type="match status" value="1"/>
</dbReference>
<dbReference type="HAMAP" id="MF_01351">
    <property type="entry name" value="NDH1_NuoI"/>
    <property type="match status" value="1"/>
</dbReference>
<dbReference type="InterPro" id="IPR017896">
    <property type="entry name" value="4Fe4S_Fe-S-bd"/>
</dbReference>
<dbReference type="InterPro" id="IPR017900">
    <property type="entry name" value="4Fe4S_Fe_S_CS"/>
</dbReference>
<dbReference type="InterPro" id="IPR010226">
    <property type="entry name" value="NADH_quinone_OxRdtase_chainI"/>
</dbReference>
<dbReference type="NCBIfam" id="TIGR01971">
    <property type="entry name" value="NuoI"/>
    <property type="match status" value="1"/>
</dbReference>
<dbReference type="NCBIfam" id="NF004538">
    <property type="entry name" value="PRK05888.1-4"/>
    <property type="match status" value="1"/>
</dbReference>
<dbReference type="NCBIfam" id="NF004539">
    <property type="entry name" value="PRK05888.1-5"/>
    <property type="match status" value="1"/>
</dbReference>
<dbReference type="PANTHER" id="PTHR10849:SF20">
    <property type="entry name" value="NADH DEHYDROGENASE [UBIQUINONE] IRON-SULFUR PROTEIN 8, MITOCHONDRIAL"/>
    <property type="match status" value="1"/>
</dbReference>
<dbReference type="PANTHER" id="PTHR10849">
    <property type="entry name" value="NADH DEHYDROGENASE UBIQUINONE IRON-SULFUR PROTEIN 8, MITOCHONDRIAL"/>
    <property type="match status" value="1"/>
</dbReference>
<dbReference type="Pfam" id="PF12838">
    <property type="entry name" value="Fer4_7"/>
    <property type="match status" value="1"/>
</dbReference>
<dbReference type="SUPFAM" id="SSF54862">
    <property type="entry name" value="4Fe-4S ferredoxins"/>
    <property type="match status" value="1"/>
</dbReference>
<dbReference type="PROSITE" id="PS00198">
    <property type="entry name" value="4FE4S_FER_1"/>
    <property type="match status" value="2"/>
</dbReference>
<dbReference type="PROSITE" id="PS51379">
    <property type="entry name" value="4FE4S_FER_2"/>
    <property type="match status" value="2"/>
</dbReference>
<feature type="chain" id="PRO_0000298473" description="NADH-quinone oxidoreductase subunit I">
    <location>
        <begin position="1"/>
        <end position="171"/>
    </location>
</feature>
<feature type="domain" description="4Fe-4S ferredoxin-type 1" evidence="1">
    <location>
        <begin position="63"/>
        <end position="92"/>
    </location>
</feature>
<feature type="domain" description="4Fe-4S ferredoxin-type 2" evidence="1">
    <location>
        <begin position="102"/>
        <end position="131"/>
    </location>
</feature>
<feature type="binding site" evidence="1">
    <location>
        <position position="72"/>
    </location>
    <ligand>
        <name>[4Fe-4S] cluster</name>
        <dbReference type="ChEBI" id="CHEBI:49883"/>
        <label>1</label>
    </ligand>
</feature>
<feature type="binding site" evidence="1">
    <location>
        <position position="75"/>
    </location>
    <ligand>
        <name>[4Fe-4S] cluster</name>
        <dbReference type="ChEBI" id="CHEBI:49883"/>
        <label>1</label>
    </ligand>
</feature>
<feature type="binding site" evidence="1">
    <location>
        <position position="78"/>
    </location>
    <ligand>
        <name>[4Fe-4S] cluster</name>
        <dbReference type="ChEBI" id="CHEBI:49883"/>
        <label>1</label>
    </ligand>
</feature>
<feature type="binding site" evidence="1">
    <location>
        <position position="82"/>
    </location>
    <ligand>
        <name>[4Fe-4S] cluster</name>
        <dbReference type="ChEBI" id="CHEBI:49883"/>
        <label>2</label>
    </ligand>
</feature>
<feature type="binding site" evidence="1">
    <location>
        <position position="111"/>
    </location>
    <ligand>
        <name>[4Fe-4S] cluster</name>
        <dbReference type="ChEBI" id="CHEBI:49883"/>
        <label>2</label>
    </ligand>
</feature>
<feature type="binding site" evidence="1">
    <location>
        <position position="114"/>
    </location>
    <ligand>
        <name>[4Fe-4S] cluster</name>
        <dbReference type="ChEBI" id="CHEBI:49883"/>
        <label>2</label>
    </ligand>
</feature>
<feature type="binding site" evidence="1">
    <location>
        <position position="117"/>
    </location>
    <ligand>
        <name>[4Fe-4S] cluster</name>
        <dbReference type="ChEBI" id="CHEBI:49883"/>
        <label>2</label>
    </ligand>
</feature>
<feature type="binding site" evidence="1">
    <location>
        <position position="121"/>
    </location>
    <ligand>
        <name>[4Fe-4S] cluster</name>
        <dbReference type="ChEBI" id="CHEBI:49883"/>
        <label>1</label>
    </ligand>
</feature>
<evidence type="ECO:0000255" key="1">
    <source>
        <dbReference type="HAMAP-Rule" id="MF_01351"/>
    </source>
</evidence>
<reference key="1">
    <citation type="submission" date="2006-12" db="EMBL/GenBank/DDBJ databases">
        <title>Complete sequence of Acidovorax avenae subsp. citrulli AAC00-1.</title>
        <authorList>
            <person name="Copeland A."/>
            <person name="Lucas S."/>
            <person name="Lapidus A."/>
            <person name="Barry K."/>
            <person name="Detter J.C."/>
            <person name="Glavina del Rio T."/>
            <person name="Dalin E."/>
            <person name="Tice H."/>
            <person name="Pitluck S."/>
            <person name="Kiss H."/>
            <person name="Brettin T."/>
            <person name="Bruce D."/>
            <person name="Han C."/>
            <person name="Tapia R."/>
            <person name="Gilna P."/>
            <person name="Schmutz J."/>
            <person name="Larimer F."/>
            <person name="Land M."/>
            <person name="Hauser L."/>
            <person name="Kyrpides N."/>
            <person name="Kim E."/>
            <person name="Stahl D."/>
            <person name="Richardson P."/>
        </authorList>
    </citation>
    <scope>NUCLEOTIDE SEQUENCE [LARGE SCALE GENOMIC DNA]</scope>
    <source>
        <strain>AAC00-1</strain>
    </source>
</reference>